<comment type="function">
    <text evidence="1">Major capsid protein that self-associates to form 240 hexon trimers, each in the shape of a hexagon, building most of the pseudo T=25 capsid. Assembled into trimeric units with the help of the chaperone shutoff protein. Transported by pre-protein VI to the nucleus where it associates with other structural proteins to form an empty capsid. Might be involved, through its interaction with host dyneins, in the intracellular microtubule-dependent transport of incoming viral capsid to the nucleus.</text>
</comment>
<comment type="subunit">
    <text evidence="1">Homotrimer. Interacts with the capsid vertex protein; this interaction binds the peripentonal hexons to the neighboring penton base. Interacts with the hexon-linking protein; this interaction tethers the hexons surrounding the penton to those situated in the central plate of the facet. Interacts with the hexon-interlacing protein; this interaction lashes the hexons together. Interacts with host dyneins DYNC1LI1 and DYNC1I2; this interaction might be involved in intracellular microtubule-dependent transport of incoming viral capsid. Interacts with the shutoff protein; this interaction allows folding and formation of hexons trimers. Interacts with pre-protein VI; this interaction probably allows nuclear import of hexon trimers and possibly pre-capsid assembly.</text>
</comment>
<comment type="subcellular location">
    <subcellularLocation>
        <location evidence="1">Virion</location>
    </subcellularLocation>
    <subcellularLocation>
        <location evidence="1">Host nucleus</location>
    </subcellularLocation>
    <text evidence="1">Forms the capsid icosahedric shell. Present in 720 copies per virion, assembled in 240 trimers.</text>
</comment>
<comment type="induction">
    <text evidence="1">Expressed in the late phase of the viral replicative cycle.</text>
</comment>
<comment type="miscellaneous">
    <text evidence="1">All late proteins expressed from the major late promoter are produced by alternative splicing and alternative polyadenylation of the same gene giving rise to non-overlapping ORFs. A leader sequence is present in the N-terminus of all these mRNAs and is recognized by the viral shutoff protein to provide expression although conventional translation via ribosome scanning from the cap has been shut off in the host cell.</text>
</comment>
<comment type="similarity">
    <text evidence="1 3">Belongs to the adenoviridae hexon protein family.</text>
</comment>
<proteinExistence type="inferred from homology"/>
<gene>
    <name evidence="1" type="primary">L3</name>
</gene>
<sequence length="944" mass="106088">MATPSMMPQWAYMHIAGQDASGYLSPGLVQFARATDTYFSMGNKFRNPTVAPTHDVTTDRSQRLMLRFVPVDREDNTYSYKVRYTLAVGDNRVLDMASTFFDIRGVLDRGPSFKPYSGTAYNSLAPKGAPNTSQWIVTTNGDNAVTTTTNTFGIASMKGGNITKEGLQIGKDITTTEGEEKPIYADKTYQPEPQVGEESWTDTDGTNEKFGGRALKPATNMKPCYGSFARPTNIKGGQAKNRKVKPTTEGGVETEEPDIDMEFFDGRDAVAGALAPEIVLYTENVNLETPDSHVVYKPETSNNSHANLGQQAMPNRPNYIGFRDNFVGLMYYNSTGNMGVLAGQASQLNAVVDLQDRNTELSYQLLLDSLGDRTRYFSMWNQAVDSYDPDVRIIENHGIEDELPNYCFPLNGIGPGHTYQGIKVKTDDTNGWEKDANVAPANEITIGNNLAMEINIQANLWRSFLYSNVALYLPDVYKYTPPNITLPTNTNTYEYMNGRVVSPSLVDSYINIGARWSLDPMDNVNPFNHHRNAGLRYRSMLLGNGRYVPFHIQVPQKFFAVKNLLLLPGSYTYEWNFRKDVNMVLQSSLGNDLRTDGATISFTSINLYATFFPMAHNTASTLEAMLRNDTNDQSFNDYLSAANMLYPIPANATNIPISIPSRNWAAFRGWSFTRLKTKETPSLGSGFDPYFVYSGSIPYLDGTFYLNHTFKKVAIMFDSSVSWPGNDRLLSPNEFEIKRTVDGEGYNVAQCNMTKDWFLVQMLANYNIGYQGFYIPEGYKDRMYSFFRNFQPMSRQVVDEVNYTDYKAVTLPYQHNNSGFVGYLAPTMRQGEPYPANYPYPLIGTTAVKSVTQKKFLCDRTMWRIPFSSNFMSMGALTDLGQNMLYANSAHALDMTFEVDPMDEPTLLYLLFEVFDVVRVHQPHRGVIEAVYLRTPFSAGNATT</sequence>
<feature type="initiator methionine" description="Removed; by host" evidence="1">
    <location>
        <position position="1"/>
    </location>
</feature>
<feature type="chain" id="PRO_0000221814" description="Hexon protein" evidence="1">
    <location>
        <begin position="2"/>
        <end position="944"/>
    </location>
</feature>
<feature type="region of interest" description="Disordered" evidence="2">
    <location>
        <begin position="193"/>
        <end position="216"/>
    </location>
</feature>
<feature type="region of interest" description="Disordered" evidence="2">
    <location>
        <begin position="229"/>
        <end position="253"/>
    </location>
</feature>
<feature type="site" description="Involved in interaction with pre-protein VI" evidence="1">
    <location>
        <position position="769"/>
    </location>
</feature>
<feature type="modified residue" description="N-acetylalanine; by host" evidence="1">
    <location>
        <position position="2"/>
    </location>
</feature>
<feature type="modified residue" description="Phosphotyrosine; by host" evidence="1">
    <location>
        <position position="932"/>
    </location>
</feature>
<name>CAPSH_ADE03</name>
<reference key="1">
    <citation type="journal article" date="1995" name="Virology">
        <title>Sequence characterization and comparison of human adenovirus subgenus B and E hexons.</title>
        <authorList>
            <person name="Pring-Akerblom P."/>
            <person name="Trijssenaar J."/>
            <person name="Adrian T."/>
        </authorList>
    </citation>
    <scope>NUCLEOTIDE SEQUENCE [GENOMIC DNA]</scope>
    <source>
        <strain>Isolate GB</strain>
    </source>
</reference>
<reference key="2">
    <citation type="submission" date="1998-09" db="EMBL/GenBank/DDBJ databases">
        <authorList>
            <person name="Pring-Akerblom P."/>
        </authorList>
    </citation>
    <scope>SEQUENCE REVISION</scope>
</reference>
<organism>
    <name type="scientific">Human adenovirus B serotype 3</name>
    <name type="common">HAdV-3</name>
    <name type="synonym">Human adenovirus 3</name>
    <dbReference type="NCBI Taxonomy" id="45659"/>
    <lineage>
        <taxon>Viruses</taxon>
        <taxon>Varidnaviria</taxon>
        <taxon>Bamfordvirae</taxon>
        <taxon>Preplasmiviricota</taxon>
        <taxon>Tectiliviricetes</taxon>
        <taxon>Rowavirales</taxon>
        <taxon>Adenoviridae</taxon>
        <taxon>Mastadenovirus</taxon>
        <taxon>Human mastadenovirus B</taxon>
    </lineage>
</organism>
<organismHost>
    <name type="scientific">Homo sapiens</name>
    <name type="common">Human</name>
    <dbReference type="NCBI Taxonomy" id="9606"/>
</organismHost>
<keyword id="KW-0007">Acetylation</keyword>
<keyword id="KW-0167">Capsid protein</keyword>
<keyword id="KW-1176">Cytoplasmic inwards viral transport</keyword>
<keyword id="KW-1048">Host nucleus</keyword>
<keyword id="KW-0945">Host-virus interaction</keyword>
<keyword id="KW-0426">Late protein</keyword>
<keyword id="KW-1177">Microtubular inwards viral transport</keyword>
<keyword id="KW-0597">Phosphoprotein</keyword>
<keyword id="KW-1148">T=25 icosahedral capsid protein</keyword>
<keyword id="KW-0946">Virion</keyword>
<keyword id="KW-1160">Virus entry into host cell</keyword>
<evidence type="ECO:0000255" key="1">
    <source>
        <dbReference type="HAMAP-Rule" id="MF_04051"/>
    </source>
</evidence>
<evidence type="ECO:0000256" key="2">
    <source>
        <dbReference type="SAM" id="MobiDB-lite"/>
    </source>
</evidence>
<evidence type="ECO:0000305" key="3"/>
<dbReference type="EMBL" id="X76549">
    <property type="protein sequence ID" value="CAA54051.1"/>
    <property type="molecule type" value="Genomic_DNA"/>
</dbReference>
<dbReference type="PIR" id="S39298">
    <property type="entry name" value="S39298"/>
</dbReference>
<dbReference type="SMR" id="P36849"/>
<dbReference type="GO" id="GO:0043657">
    <property type="term" value="C:host cell"/>
    <property type="evidence" value="ECO:0007669"/>
    <property type="project" value="GOC"/>
</dbReference>
<dbReference type="GO" id="GO:0042025">
    <property type="term" value="C:host cell nucleus"/>
    <property type="evidence" value="ECO:0007669"/>
    <property type="project" value="UniProtKB-SubCell"/>
</dbReference>
<dbReference type="GO" id="GO:0039623">
    <property type="term" value="C:T=25 icosahedral viral capsid"/>
    <property type="evidence" value="ECO:0007669"/>
    <property type="project" value="UniProtKB-UniRule"/>
</dbReference>
<dbReference type="GO" id="GO:0005198">
    <property type="term" value="F:structural molecule activity"/>
    <property type="evidence" value="ECO:0007669"/>
    <property type="project" value="UniProtKB-UniRule"/>
</dbReference>
<dbReference type="GO" id="GO:0075521">
    <property type="term" value="P:microtubule-dependent intracellular transport of viral material towards nucleus"/>
    <property type="evidence" value="ECO:0007669"/>
    <property type="project" value="UniProtKB-UniRule"/>
</dbReference>
<dbReference type="GO" id="GO:0046718">
    <property type="term" value="P:symbiont entry into host cell"/>
    <property type="evidence" value="ECO:0007669"/>
    <property type="project" value="UniProtKB-UniRule"/>
</dbReference>
<dbReference type="FunFam" id="2.70.9.10:FF:000001">
    <property type="entry name" value="Hexon protein"/>
    <property type="match status" value="1"/>
</dbReference>
<dbReference type="Gene3D" id="2.70.9.10">
    <property type="entry name" value="Adenovirus Type 2 Hexon, domain 4"/>
    <property type="match status" value="2"/>
</dbReference>
<dbReference type="Gene3D" id="3.90.39.10">
    <property type="entry name" value="Hexon Major Viral Coat Protein, domain 2"/>
    <property type="match status" value="1"/>
</dbReference>
<dbReference type="Gene3D" id="3.90.249.10">
    <property type="entry name" value="Hexon Major Viral Coat Protein, domain 3"/>
    <property type="match status" value="2"/>
</dbReference>
<dbReference type="HAMAP" id="MF_04051">
    <property type="entry name" value="ADV_CAPSH"/>
    <property type="match status" value="1"/>
</dbReference>
<dbReference type="InterPro" id="IPR016108">
    <property type="entry name" value="Adenovirus_Pll_hexon_C"/>
</dbReference>
<dbReference type="InterPro" id="IPR016107">
    <property type="entry name" value="Adenovirus_Pll_hexon_N"/>
</dbReference>
<dbReference type="InterPro" id="IPR044942">
    <property type="entry name" value="Adenovirus_Pll_hexon_sub2"/>
</dbReference>
<dbReference type="InterPro" id="IPR016110">
    <property type="entry name" value="Adenovirus_Pll_hexon_sub3"/>
</dbReference>
<dbReference type="InterPro" id="IPR037542">
    <property type="entry name" value="ADV_hexon"/>
</dbReference>
<dbReference type="InterPro" id="IPR016112">
    <property type="entry name" value="VP_dsDNA_II"/>
</dbReference>
<dbReference type="Pfam" id="PF01065">
    <property type="entry name" value="Adeno_hexon"/>
    <property type="match status" value="1"/>
</dbReference>
<dbReference type="Pfam" id="PF03678">
    <property type="entry name" value="Adeno_hexon_C"/>
    <property type="match status" value="1"/>
</dbReference>
<dbReference type="SUPFAM" id="SSF49749">
    <property type="entry name" value="Group II dsDNA viruses VP"/>
    <property type="match status" value="2"/>
</dbReference>
<protein>
    <recommendedName>
        <fullName evidence="1">Hexon protein</fullName>
        <shortName evidence="1">CP-H</shortName>
    </recommendedName>
    <alternativeName>
        <fullName evidence="1">Protein II</fullName>
    </alternativeName>
</protein>
<accession>P36849</accession>